<gene>
    <name evidence="4" type="primary">FAR1</name>
    <name type="ordered locus">At5g22500</name>
    <name type="ORF">MQJ16.4</name>
</gene>
<keyword id="KW-0444">Lipid biosynthesis</keyword>
<keyword id="KW-0443">Lipid metabolism</keyword>
<keyword id="KW-0521">NADP</keyword>
<keyword id="KW-0560">Oxidoreductase</keyword>
<keyword id="KW-1185">Reference proteome</keyword>
<reference key="1">
    <citation type="journal article" date="1997" name="Plant J.">
        <title>The Arabidopsis MALE STERILITY 2 protein shares similarity with reductases in elongation/condensation complexes.</title>
        <authorList>
            <person name="Aarts M.G.M."/>
            <person name="Hodge R.P."/>
            <person name="Kalantidis K."/>
            <person name="Florack D."/>
            <person name="Wilson Z.A."/>
            <person name="Mulligan B.J."/>
            <person name="Stiekema W.J."/>
            <person name="Scott R."/>
            <person name="Pereira A."/>
        </authorList>
    </citation>
    <scope>NUCLEOTIDE SEQUENCE [MRNA]</scope>
    <source>
        <strain>cv. Columbia</strain>
    </source>
</reference>
<reference key="2">
    <citation type="journal article" date="2009" name="J. Plant Physiol.">
        <title>Functional expression of five Arabidopsis fatty acyl-CoA reductase genes in Escherichia coli.</title>
        <authorList>
            <person name="Doan T.P.T."/>
            <person name="Carlsson A.S."/>
            <person name="Hamberg M."/>
            <person name="Buelow L."/>
            <person name="Stymne S."/>
            <person name="Olsson P."/>
        </authorList>
    </citation>
    <scope>NUCLEOTIDE SEQUENCE [MRNA]</scope>
    <scope>FUNCTION</scope>
    <scope>CATALYTIC ACTIVITY</scope>
</reference>
<reference key="3">
    <citation type="journal article" date="1998" name="DNA Res.">
        <title>Structural analysis of Arabidopsis thaliana chromosome 5. VI. Sequence features of the regions of 1,367,185 bp covered by 19 physically assigned P1 and TAC clones.</title>
        <authorList>
            <person name="Kotani H."/>
            <person name="Nakamura Y."/>
            <person name="Sato S."/>
            <person name="Asamizu E."/>
            <person name="Kaneko T."/>
            <person name="Miyajima N."/>
            <person name="Tabata S."/>
        </authorList>
    </citation>
    <scope>NUCLEOTIDE SEQUENCE [LARGE SCALE GENOMIC DNA]</scope>
    <source>
        <strain>cv. Columbia</strain>
    </source>
</reference>
<reference key="4">
    <citation type="journal article" date="2017" name="Plant J.">
        <title>Araport11: a complete reannotation of the Arabidopsis thaliana reference genome.</title>
        <authorList>
            <person name="Cheng C.Y."/>
            <person name="Krishnakumar V."/>
            <person name="Chan A.P."/>
            <person name="Thibaud-Nissen F."/>
            <person name="Schobel S."/>
            <person name="Town C.D."/>
        </authorList>
    </citation>
    <scope>GENOME REANNOTATION</scope>
    <source>
        <strain>cv. Columbia</strain>
    </source>
</reference>
<reference key="5">
    <citation type="journal article" date="2003" name="Science">
        <title>Empirical analysis of transcriptional activity in the Arabidopsis genome.</title>
        <authorList>
            <person name="Yamada K."/>
            <person name="Lim J."/>
            <person name="Dale J.M."/>
            <person name="Chen H."/>
            <person name="Shinn P."/>
            <person name="Palm C.J."/>
            <person name="Southwick A.M."/>
            <person name="Wu H.C."/>
            <person name="Kim C.J."/>
            <person name="Nguyen M."/>
            <person name="Pham P.K."/>
            <person name="Cheuk R.F."/>
            <person name="Karlin-Newmann G."/>
            <person name="Liu S.X."/>
            <person name="Lam B."/>
            <person name="Sakano H."/>
            <person name="Wu T."/>
            <person name="Yu G."/>
            <person name="Miranda M."/>
            <person name="Quach H.L."/>
            <person name="Tripp M."/>
            <person name="Chang C.H."/>
            <person name="Lee J.M."/>
            <person name="Toriumi M.J."/>
            <person name="Chan M.M."/>
            <person name="Tang C.C."/>
            <person name="Onodera C.S."/>
            <person name="Deng J.M."/>
            <person name="Akiyama K."/>
            <person name="Ansari Y."/>
            <person name="Arakawa T."/>
            <person name="Banh J."/>
            <person name="Banno F."/>
            <person name="Bowser L."/>
            <person name="Brooks S.Y."/>
            <person name="Carninci P."/>
            <person name="Chao Q."/>
            <person name="Choy N."/>
            <person name="Enju A."/>
            <person name="Goldsmith A.D."/>
            <person name="Gurjal M."/>
            <person name="Hansen N.F."/>
            <person name="Hayashizaki Y."/>
            <person name="Johnson-Hopson C."/>
            <person name="Hsuan V.W."/>
            <person name="Iida K."/>
            <person name="Karnes M."/>
            <person name="Khan S."/>
            <person name="Koesema E."/>
            <person name="Ishida J."/>
            <person name="Jiang P.X."/>
            <person name="Jones T."/>
            <person name="Kawai J."/>
            <person name="Kamiya A."/>
            <person name="Meyers C."/>
            <person name="Nakajima M."/>
            <person name="Narusaka M."/>
            <person name="Seki M."/>
            <person name="Sakurai T."/>
            <person name="Satou M."/>
            <person name="Tamse R."/>
            <person name="Vaysberg M."/>
            <person name="Wallender E.K."/>
            <person name="Wong C."/>
            <person name="Yamamura Y."/>
            <person name="Yuan S."/>
            <person name="Shinozaki K."/>
            <person name="Davis R.W."/>
            <person name="Theologis A."/>
            <person name="Ecker J.R."/>
        </authorList>
    </citation>
    <scope>NUCLEOTIDE SEQUENCE [LARGE SCALE MRNA]</scope>
    <source>
        <strain>cv. Columbia</strain>
    </source>
</reference>
<reference key="6">
    <citation type="journal article" date="2010" name="Plant Physiol.">
        <title>Three Arabidopsis fatty acyl-coenzyme A reductases, FAR1, FAR4, and FAR5, generate primary fatty alcohols associated with suberin deposition.</title>
        <authorList>
            <person name="Domergue F."/>
            <person name="Vishwanath S.J."/>
            <person name="Joubes J."/>
            <person name="Ono J."/>
            <person name="Lee J.A."/>
            <person name="Bourdon M."/>
            <person name="Alhattab R."/>
            <person name="Lowe C."/>
            <person name="Pascal S."/>
            <person name="Lessire R."/>
            <person name="Rowland O."/>
        </authorList>
    </citation>
    <scope>FUNCTION</scope>
    <scope>CATALYTIC ACTIVITY</scope>
    <scope>TISSUE SPECIFICITY</scope>
    <scope>INDUCTION</scope>
</reference>
<reference key="7">
    <citation type="journal article" date="2012" name="Plant Physiol.">
        <title>Identification of an Arabidopsis fatty alcohol:caffeoyl-Coenzyme A acyltransferase required for the synthesis of alkyl hydroxycinnamates in root waxes.</title>
        <authorList>
            <person name="Kosma D.K."/>
            <person name="Molina I."/>
            <person name="Ohlrogge J.B."/>
            <person name="Pollard M."/>
        </authorList>
    </citation>
    <scope>FUNCTION</scope>
</reference>
<name>FACR1_ARATH</name>
<proteinExistence type="evidence at protein level"/>
<comment type="function">
    <text evidence="1 2 3">Catalyzes the reduction of fatty acyl-CoA to fatty alcohols (PubMed:19062129, PubMed:20571114). Catalyzes specifically the formation of C18:0 and C22:0 fatty alcohols. Provides the fatty alcohols required for synthesis of suberin in roots, seed coat and wound-induced leaf tissue (PubMed:20571114). Provides the fatty alcohols required for synthesis of alkyl hydroxycinnamates in root waxes (PubMed:22797656).</text>
</comment>
<comment type="catalytic activity">
    <reaction evidence="1">
        <text>a long-chain fatty acyl-CoA + 2 NADPH + 2 H(+) = a long-chain primary fatty alcohol + 2 NADP(+) + CoA</text>
        <dbReference type="Rhea" id="RHEA:52716"/>
        <dbReference type="ChEBI" id="CHEBI:15378"/>
        <dbReference type="ChEBI" id="CHEBI:57287"/>
        <dbReference type="ChEBI" id="CHEBI:57783"/>
        <dbReference type="ChEBI" id="CHEBI:58349"/>
        <dbReference type="ChEBI" id="CHEBI:77396"/>
        <dbReference type="ChEBI" id="CHEBI:83139"/>
        <dbReference type="EC" id="1.2.1.84"/>
    </reaction>
</comment>
<comment type="tissue specificity">
    <text evidence="2">Expressed in the endodermal cell layer surrounding the central vasculature in roots. Expressed in the hilum region of seeds. Expressed in lateral root tips, cotyledons, the shoot apex, young leaves, petals, stamen filaments, and receptacle of siliques.</text>
</comment>
<comment type="induction">
    <text evidence="2">Induced by wounding and salt stress.</text>
</comment>
<comment type="similarity">
    <text evidence="5">Belongs to the fatty acyl-CoA reductase family.</text>
</comment>
<dbReference type="EC" id="1.2.1.84" evidence="1 2"/>
<dbReference type="EMBL" id="X99923">
    <property type="protein sequence ID" value="CAA68191.1"/>
    <property type="molecule type" value="mRNA"/>
</dbReference>
<dbReference type="EMBL" id="EU280149">
    <property type="protein sequence ID" value="ABZ10951.1"/>
    <property type="molecule type" value="mRNA"/>
</dbReference>
<dbReference type="EMBL" id="AB012244">
    <property type="protein sequence ID" value="BAB09122.1"/>
    <property type="molecule type" value="Genomic_DNA"/>
</dbReference>
<dbReference type="EMBL" id="CP002688">
    <property type="protein sequence ID" value="AED93034.1"/>
    <property type="molecule type" value="Genomic_DNA"/>
</dbReference>
<dbReference type="EMBL" id="AY035042">
    <property type="protein sequence ID" value="AAK59547.1"/>
    <property type="molecule type" value="mRNA"/>
</dbReference>
<dbReference type="EMBL" id="AY051075">
    <property type="protein sequence ID" value="AAK93752.1"/>
    <property type="molecule type" value="mRNA"/>
</dbReference>
<dbReference type="RefSeq" id="NP_197642.1">
    <property type="nucleotide sequence ID" value="NM_122155.4"/>
</dbReference>
<dbReference type="SMR" id="Q39152"/>
<dbReference type="FunCoup" id="Q39152">
    <property type="interactions" value="390"/>
</dbReference>
<dbReference type="STRING" id="3702.Q39152"/>
<dbReference type="PaxDb" id="3702-AT5G22500.1"/>
<dbReference type="ProteomicsDB" id="222372"/>
<dbReference type="EnsemblPlants" id="AT5G22500.1">
    <property type="protein sequence ID" value="AT5G22500.1"/>
    <property type="gene ID" value="AT5G22500"/>
</dbReference>
<dbReference type="GeneID" id="832311"/>
<dbReference type="Gramene" id="AT5G22500.1">
    <property type="protein sequence ID" value="AT5G22500.1"/>
    <property type="gene ID" value="AT5G22500"/>
</dbReference>
<dbReference type="KEGG" id="ath:AT5G22500"/>
<dbReference type="Araport" id="AT5G22500"/>
<dbReference type="TAIR" id="AT5G22500">
    <property type="gene designation" value="FAR1"/>
</dbReference>
<dbReference type="eggNOG" id="KOG1221">
    <property type="taxonomic scope" value="Eukaryota"/>
</dbReference>
<dbReference type="HOGENOM" id="CLU_024661_4_1_1"/>
<dbReference type="InParanoid" id="Q39152"/>
<dbReference type="PhylomeDB" id="Q39152"/>
<dbReference type="BioCyc" id="ARA:AT5G22500-MONOMER"/>
<dbReference type="BRENDA" id="1.2.1.42">
    <property type="organism ID" value="399"/>
</dbReference>
<dbReference type="BRENDA" id="1.2.1.50">
    <property type="organism ID" value="399"/>
</dbReference>
<dbReference type="BRENDA" id="1.2.1.84">
    <property type="organism ID" value="399"/>
</dbReference>
<dbReference type="BRENDA" id="1.2.1.B25">
    <property type="organism ID" value="399"/>
</dbReference>
<dbReference type="PRO" id="PR:Q39152"/>
<dbReference type="Proteomes" id="UP000006548">
    <property type="component" value="Chromosome 5"/>
</dbReference>
<dbReference type="ExpressionAtlas" id="Q39152">
    <property type="expression patterns" value="baseline and differential"/>
</dbReference>
<dbReference type="GO" id="GO:0009507">
    <property type="term" value="C:chloroplast"/>
    <property type="evidence" value="ECO:0007005"/>
    <property type="project" value="TAIR"/>
</dbReference>
<dbReference type="GO" id="GO:0005886">
    <property type="term" value="C:plasma membrane"/>
    <property type="evidence" value="ECO:0007005"/>
    <property type="project" value="TAIR"/>
</dbReference>
<dbReference type="GO" id="GO:0102965">
    <property type="term" value="F:alcohol-forming long-chain fatty acyl-CoA reductase activity"/>
    <property type="evidence" value="ECO:0007669"/>
    <property type="project" value="UniProtKB-EC"/>
</dbReference>
<dbReference type="GO" id="GO:0080019">
    <property type="term" value="F:alcohol-forming very long-chain fatty acyl-CoA reductase activity"/>
    <property type="evidence" value="ECO:0000314"/>
    <property type="project" value="TAIR"/>
</dbReference>
<dbReference type="GO" id="GO:0050062">
    <property type="term" value="F:long-chain-fatty-acyl-CoA reductase activity"/>
    <property type="evidence" value="ECO:0000314"/>
    <property type="project" value="TAIR"/>
</dbReference>
<dbReference type="GO" id="GO:0006629">
    <property type="term" value="P:lipid metabolic process"/>
    <property type="evidence" value="ECO:0007669"/>
    <property type="project" value="UniProtKB-KW"/>
</dbReference>
<dbReference type="GO" id="GO:0009651">
    <property type="term" value="P:response to salt stress"/>
    <property type="evidence" value="ECO:0000270"/>
    <property type="project" value="TAIR"/>
</dbReference>
<dbReference type="GO" id="GO:0009611">
    <property type="term" value="P:response to wounding"/>
    <property type="evidence" value="ECO:0000315"/>
    <property type="project" value="TAIR"/>
</dbReference>
<dbReference type="GO" id="GO:0010345">
    <property type="term" value="P:suberin biosynthetic process"/>
    <property type="evidence" value="ECO:0000315"/>
    <property type="project" value="TAIR"/>
</dbReference>
<dbReference type="CDD" id="cd05236">
    <property type="entry name" value="FAR-N_SDR_e"/>
    <property type="match status" value="1"/>
</dbReference>
<dbReference type="CDD" id="cd09071">
    <property type="entry name" value="FAR_C"/>
    <property type="match status" value="1"/>
</dbReference>
<dbReference type="Gene3D" id="3.40.50.720">
    <property type="entry name" value="NAD(P)-binding Rossmann-like Domain"/>
    <property type="match status" value="1"/>
</dbReference>
<dbReference type="InterPro" id="IPR026055">
    <property type="entry name" value="FAR"/>
</dbReference>
<dbReference type="InterPro" id="IPR033640">
    <property type="entry name" value="FAR_C"/>
</dbReference>
<dbReference type="InterPro" id="IPR013120">
    <property type="entry name" value="Far_NAD-bd"/>
</dbReference>
<dbReference type="InterPro" id="IPR036291">
    <property type="entry name" value="NAD(P)-bd_dom_sf"/>
</dbReference>
<dbReference type="PANTHER" id="PTHR11011:SF109">
    <property type="entry name" value="FATTY ACYL-COA REDUCTASE 1"/>
    <property type="match status" value="1"/>
</dbReference>
<dbReference type="PANTHER" id="PTHR11011">
    <property type="entry name" value="MALE STERILITY PROTEIN 2-RELATED"/>
    <property type="match status" value="1"/>
</dbReference>
<dbReference type="Pfam" id="PF07993">
    <property type="entry name" value="NAD_binding_4"/>
    <property type="match status" value="1"/>
</dbReference>
<dbReference type="Pfam" id="PF03015">
    <property type="entry name" value="Sterile"/>
    <property type="match status" value="1"/>
</dbReference>
<dbReference type="SUPFAM" id="SSF51735">
    <property type="entry name" value="NAD(P)-binding Rossmann-fold domains"/>
    <property type="match status" value="1"/>
</dbReference>
<evidence type="ECO:0000269" key="1">
    <source>
    </source>
</evidence>
<evidence type="ECO:0000269" key="2">
    <source>
    </source>
</evidence>
<evidence type="ECO:0000269" key="3">
    <source>
    </source>
</evidence>
<evidence type="ECO:0000303" key="4">
    <source>
    </source>
</evidence>
<evidence type="ECO:0000305" key="5"/>
<accession>Q39152</accession>
<protein>
    <recommendedName>
        <fullName evidence="5">Fatty acyl-CoA reductase 1</fullName>
        <ecNumber evidence="1 2">1.2.1.84</ecNumber>
    </recommendedName>
</protein>
<feature type="chain" id="PRO_0000378342" description="Fatty acyl-CoA reductase 1">
    <location>
        <begin position="1"/>
        <end position="491"/>
    </location>
</feature>
<organism>
    <name type="scientific">Arabidopsis thaliana</name>
    <name type="common">Mouse-ear cress</name>
    <dbReference type="NCBI Taxonomy" id="3702"/>
    <lineage>
        <taxon>Eukaryota</taxon>
        <taxon>Viridiplantae</taxon>
        <taxon>Streptophyta</taxon>
        <taxon>Embryophyta</taxon>
        <taxon>Tracheophyta</taxon>
        <taxon>Spermatophyta</taxon>
        <taxon>Magnoliopsida</taxon>
        <taxon>eudicotyledons</taxon>
        <taxon>Gunneridae</taxon>
        <taxon>Pentapetalae</taxon>
        <taxon>rosids</taxon>
        <taxon>malvids</taxon>
        <taxon>Brassicales</taxon>
        <taxon>Brassicaceae</taxon>
        <taxon>Camelineae</taxon>
        <taxon>Arabidopsis</taxon>
    </lineage>
</organism>
<sequence length="491" mass="55481">MESNCVQFLGNKTILITGAPGFLAKVLVEKILRLQPNVKKIYLLLRAPDEKSAMQRLRSEVMEIDLFKVLRNNLGEDNLNALMREKIVPVPGDISIDNLGLKDTDLIQRMWSEIDIIINIAATTNFDERYDIGLGINTFGALNVLNFAKKCVKGQLLLHVSTAYISGEQPGLLLEKPFKMGETLSGDRELDINIEHDLMKQKLKELQDCSDEEISQTMKDFGMARAKLHGWPNTYVFTKAMGEMLMGKYRENLPLVIIRPTMITSTIAEPFPGWIEGLKTLDSVIVAYGKGRLKCFLADSNSVFDLIPADMVVNAMVAAATAHSGDTGIQAIYHVGSSCKNPVTFGQLHDFTARYFAKRPLIGRNGSPIIVVKGTILSTMAQFSLYMTLRYKLPLQILRLINIVYPWSHGDNYSDLSRKIKLAMRLVELYQPYLLFKGIFDDLNTERLRMKRKENIKELDGSFEFDPKSIDWDNYITNTHIPGLITHVLKQ</sequence>